<name>TP1A_LITST</name>
<accession>P0DQK5</accession>
<comment type="function">
    <text evidence="1">Antimicrobial peptide with activity against Gram-negative and Gram-positive bacteria and fungi. Also shows hemolytic activity.</text>
</comment>
<comment type="subcellular location">
    <subcellularLocation>
        <location evidence="2">Secreted</location>
    </subcellularLocation>
</comment>
<comment type="tissue specificity">
    <text evidence="5">Expressed by the skin glands.</text>
</comment>
<comment type="developmental stage">
    <text evidence="5">Is equally expressed in juvenile and adult (male and female) frogs.</text>
</comment>
<comment type="mass spectrometry" mass="1441.8" method="MALDI" evidence="2"/>
<comment type="similarity">
    <text evidence="4">Belongs to the frog skin active peptide (FSAP) family. Temporin subfamily.</text>
</comment>
<comment type="online information" name="The antimicrobial peptide database">
    <link uri="https://wangapd3.com/database/query_output.php?ID=01444"/>
</comment>
<proteinExistence type="evidence at protein level"/>
<protein>
    <recommendedName>
        <fullName evidence="3">Temporin-1SPa</fullName>
    </recommendedName>
</protein>
<reference key="1">
    <citation type="journal article" date="2004" name="Comp. Biochem. Physiol.">
        <title>Purification and characterization of antimicrobial peptides from the skin secretions of the mink frog (Rana septentrionalis).</title>
        <authorList>
            <person name="Bevier C.R."/>
            <person name="Sonnevend A."/>
            <person name="Kolodziejek J."/>
            <person name="Nowotny N."/>
            <person name="Nielsen P.F."/>
            <person name="Conlon J.M."/>
        </authorList>
    </citation>
    <scope>PROTEIN SEQUENCE</scope>
    <scope>AMIDATION AT PHE-13</scope>
    <scope>SUBCELLULAR LOCATION</scope>
    <scope>MASS SPECTROMETRY</scope>
    <scope>DEVELOPMENTAL STAGE</scope>
    <source>
        <tissue>Skin secretion</tissue>
    </source>
</reference>
<dbReference type="GO" id="GO:0005576">
    <property type="term" value="C:extracellular region"/>
    <property type="evidence" value="ECO:0007669"/>
    <property type="project" value="UniProtKB-SubCell"/>
</dbReference>
<dbReference type="GO" id="GO:0042742">
    <property type="term" value="P:defense response to bacterium"/>
    <property type="evidence" value="ECO:0007669"/>
    <property type="project" value="UniProtKB-KW"/>
</dbReference>
<dbReference type="GO" id="GO:0050832">
    <property type="term" value="P:defense response to fungus"/>
    <property type="evidence" value="ECO:0007669"/>
    <property type="project" value="UniProtKB-KW"/>
</dbReference>
<dbReference type="GO" id="GO:0031640">
    <property type="term" value="P:killing of cells of another organism"/>
    <property type="evidence" value="ECO:0007669"/>
    <property type="project" value="UniProtKB-KW"/>
</dbReference>
<sequence length="13" mass="1444">FLSAITSILGKFF</sequence>
<evidence type="ECO:0000250" key="1">
    <source>
        <dbReference type="UniProtKB" id="P0DQK6"/>
    </source>
</evidence>
<evidence type="ECO:0000269" key="2">
    <source>
    </source>
</evidence>
<evidence type="ECO:0000303" key="3">
    <source>
    </source>
</evidence>
<evidence type="ECO:0000305" key="4"/>
<evidence type="ECO:0000305" key="5">
    <source>
    </source>
</evidence>
<keyword id="KW-0027">Amidation</keyword>
<keyword id="KW-0878">Amphibian defense peptide</keyword>
<keyword id="KW-0044">Antibiotic</keyword>
<keyword id="KW-0929">Antimicrobial</keyword>
<keyword id="KW-0204">Cytolysis</keyword>
<keyword id="KW-0903">Direct protein sequencing</keyword>
<keyword id="KW-0295">Fungicide</keyword>
<keyword id="KW-0354">Hemolysis</keyword>
<keyword id="KW-0964">Secreted</keyword>
<feature type="peptide" id="PRO_0000449482" description="Temporin-1SPa" evidence="2">
    <location>
        <begin position="1"/>
        <end position="13"/>
    </location>
</feature>
<feature type="modified residue" description="Phenylalanine amide" evidence="2">
    <location>
        <position position="13"/>
    </location>
</feature>
<organism>
    <name type="scientific">Lithobates septentrionalis</name>
    <name type="common">Mink frog</name>
    <name type="synonym">Rana septentrionalis</name>
    <dbReference type="NCBI Taxonomy" id="190274"/>
    <lineage>
        <taxon>Eukaryota</taxon>
        <taxon>Metazoa</taxon>
        <taxon>Chordata</taxon>
        <taxon>Craniata</taxon>
        <taxon>Vertebrata</taxon>
        <taxon>Euteleostomi</taxon>
        <taxon>Amphibia</taxon>
        <taxon>Batrachia</taxon>
        <taxon>Anura</taxon>
        <taxon>Neobatrachia</taxon>
        <taxon>Ranoidea</taxon>
        <taxon>Ranidae</taxon>
        <taxon>Lithobates</taxon>
    </lineage>
</organism>